<name>HSPB8_MOUSE</name>
<comment type="function">
    <text evidence="6">Involved in the chaperone-assisted selective autophagy (CASA), a crucial process for protein quality control, particularly in mechanical strained cells and tissues such as muscle (PubMed:20060297). Displays temperature-dependent chaperone activity.</text>
</comment>
<comment type="subunit">
    <text evidence="2 6">Monomer. Forms a ternary complex with BAG3 and HSPA1A (By similarity). Component of the chaperone-assisted selective autophagy (CASA) complex consisting of BAG3, HSPA8/HSC70, HSPB8 and STUB1/CHIP (PubMed:20060297). Interacts with HSPB1 (By similarity). Interacts with DNAJB6 (By similarity). Interacts with BAG3 (By similarity) (PubMed:20060297).</text>
</comment>
<comment type="subcellular location">
    <subcellularLocation>
        <location evidence="2">Cytoplasm</location>
    </subcellularLocation>
    <subcellularLocation>
        <location evidence="2">Nucleus</location>
    </subcellularLocation>
    <text evidence="2">Translocates to nuclear foci during heat shock.</text>
</comment>
<comment type="tissue specificity">
    <text evidence="5">Highly expressed in skeletal muscle, heart, uterus, liver, lung and ovary. Low levels found in stomach and brain. Not detected in small intestine, large intestine, kidney, spleen and testis. In the ovary, expression is concentrated in the endometrium and in the connective tissue between the circular and longitudinal muscles of the myometrium.</text>
</comment>
<comment type="developmental stage">
    <text evidence="5">Detected in developing heart throughout embryonic development but only detected in developing liver close to time of birth. In the adult ovary, expression is highest during decidualization and early pregnancy.</text>
</comment>
<comment type="induction">
    <text evidence="5">By progesterone.</text>
</comment>
<comment type="similarity">
    <text evidence="3">Belongs to the small heat shock protein (HSP20) family.</text>
</comment>
<proteinExistence type="evidence at protein level"/>
<protein>
    <recommendedName>
        <fullName>Heat shock protein beta-8</fullName>
        <shortName>HspB8</shortName>
    </recommendedName>
    <alternativeName>
        <fullName>Alpha-crystallin C chain</fullName>
    </alternativeName>
    <alternativeName>
        <fullName>Small stress protein-like protein HSP22</fullName>
    </alternativeName>
</protein>
<feature type="chain" id="PRO_0000125947" description="Heat shock protein beta-8">
    <location>
        <begin position="1"/>
        <end position="196"/>
    </location>
</feature>
<feature type="domain" description="sHSP" evidence="3">
    <location>
        <begin position="78"/>
        <end position="185"/>
    </location>
</feature>
<feature type="region of interest" description="Disordered" evidence="4">
    <location>
        <begin position="1"/>
        <end position="28"/>
    </location>
</feature>
<feature type="region of interest" description="Disordered" evidence="4">
    <location>
        <begin position="176"/>
        <end position="196"/>
    </location>
</feature>
<feature type="compositionally biased region" description="Polar residues" evidence="4">
    <location>
        <begin position="178"/>
        <end position="196"/>
    </location>
</feature>
<feature type="modified residue" description="Phosphoserine" evidence="2">
    <location>
        <position position="24"/>
    </location>
</feature>
<feature type="modified residue" description="Phosphoserine" evidence="1">
    <location>
        <position position="57"/>
    </location>
</feature>
<feature type="modified residue" description="Phosphothreonine" evidence="2">
    <location>
        <position position="63"/>
    </location>
</feature>
<feature type="modified residue" description="Asymmetric dimethylarginine" evidence="10">
    <location>
        <position position="71"/>
    </location>
</feature>
<feature type="modified residue" description="Asymmetric dimethylarginine" evidence="10">
    <location>
        <position position="78"/>
    </location>
</feature>
<feature type="modified residue" description="Phosphoserine" evidence="7 8 9">
    <location>
        <position position="87"/>
    </location>
</feature>
<evidence type="ECO:0000250" key="1">
    <source>
        <dbReference type="UniProtKB" id="Q9EPX0"/>
    </source>
</evidence>
<evidence type="ECO:0000250" key="2">
    <source>
        <dbReference type="UniProtKB" id="Q9UJY1"/>
    </source>
</evidence>
<evidence type="ECO:0000255" key="3">
    <source>
        <dbReference type="PROSITE-ProRule" id="PRU00285"/>
    </source>
</evidence>
<evidence type="ECO:0000256" key="4">
    <source>
        <dbReference type="SAM" id="MobiDB-lite"/>
    </source>
</evidence>
<evidence type="ECO:0000269" key="5">
    <source>
    </source>
</evidence>
<evidence type="ECO:0000269" key="6">
    <source>
    </source>
</evidence>
<evidence type="ECO:0007744" key="7">
    <source>
    </source>
</evidence>
<evidence type="ECO:0007744" key="8">
    <source>
    </source>
</evidence>
<evidence type="ECO:0007744" key="9">
    <source>
    </source>
</evidence>
<evidence type="ECO:0007744" key="10">
    <source>
    </source>
</evidence>
<reference key="1">
    <citation type="journal article" date="2001" name="J. Biol. Chem.">
        <title>HSP22, a new member of the small heat shock protein superfamily, interacts with mimic of phosphorylated HSP27 (3DHSP27).</title>
        <authorList>
            <person name="Benndorf R."/>
            <person name="Sun X."/>
            <person name="Gilmont R.R."/>
            <person name="Biederman K.J."/>
            <person name="Molloy M.P."/>
            <person name="Goodmurphy C.W."/>
            <person name="Cheng H."/>
            <person name="Andrews P.C."/>
            <person name="Welsh M.J."/>
        </authorList>
    </citation>
    <scope>NUCLEOTIDE SEQUENCE [MRNA]</scope>
    <scope>INTERACTION WITH HSPB1</scope>
    <source>
        <strain>C57BL/6J</strain>
        <tissue>Heart</tissue>
    </source>
</reference>
<reference key="2">
    <citation type="journal article" date="2001" name="Biol. Reprod.">
        <title>Increased expression of a novel heat shock protein transcript in the mouse uterus during decidualization and in response to progesterone.</title>
        <authorList>
            <person name="Bany B.M."/>
            <person name="Schultz G.A."/>
        </authorList>
    </citation>
    <scope>NUCLEOTIDE SEQUENCE [MRNA]</scope>
    <scope>TISSUE SPECIFICITY</scope>
    <scope>DEVELOPMENTAL STAGE</scope>
    <scope>INDUCTION</scope>
    <source>
        <strain>CD-1</strain>
        <tissue>Decidua</tissue>
    </source>
</reference>
<reference key="3">
    <citation type="journal article" date="2005" name="Science">
        <title>The transcriptional landscape of the mammalian genome.</title>
        <authorList>
            <person name="Carninci P."/>
            <person name="Kasukawa T."/>
            <person name="Katayama S."/>
            <person name="Gough J."/>
            <person name="Frith M.C."/>
            <person name="Maeda N."/>
            <person name="Oyama R."/>
            <person name="Ravasi T."/>
            <person name="Lenhard B."/>
            <person name="Wells C."/>
            <person name="Kodzius R."/>
            <person name="Shimokawa K."/>
            <person name="Bajic V.B."/>
            <person name="Brenner S.E."/>
            <person name="Batalov S."/>
            <person name="Forrest A.R."/>
            <person name="Zavolan M."/>
            <person name="Davis M.J."/>
            <person name="Wilming L.G."/>
            <person name="Aidinis V."/>
            <person name="Allen J.E."/>
            <person name="Ambesi-Impiombato A."/>
            <person name="Apweiler R."/>
            <person name="Aturaliya R.N."/>
            <person name="Bailey T.L."/>
            <person name="Bansal M."/>
            <person name="Baxter L."/>
            <person name="Beisel K.W."/>
            <person name="Bersano T."/>
            <person name="Bono H."/>
            <person name="Chalk A.M."/>
            <person name="Chiu K.P."/>
            <person name="Choudhary V."/>
            <person name="Christoffels A."/>
            <person name="Clutterbuck D.R."/>
            <person name="Crowe M.L."/>
            <person name="Dalla E."/>
            <person name="Dalrymple B.P."/>
            <person name="de Bono B."/>
            <person name="Della Gatta G."/>
            <person name="di Bernardo D."/>
            <person name="Down T."/>
            <person name="Engstrom P."/>
            <person name="Fagiolini M."/>
            <person name="Faulkner G."/>
            <person name="Fletcher C.F."/>
            <person name="Fukushima T."/>
            <person name="Furuno M."/>
            <person name="Futaki S."/>
            <person name="Gariboldi M."/>
            <person name="Georgii-Hemming P."/>
            <person name="Gingeras T.R."/>
            <person name="Gojobori T."/>
            <person name="Green R.E."/>
            <person name="Gustincich S."/>
            <person name="Harbers M."/>
            <person name="Hayashi Y."/>
            <person name="Hensch T.K."/>
            <person name="Hirokawa N."/>
            <person name="Hill D."/>
            <person name="Huminiecki L."/>
            <person name="Iacono M."/>
            <person name="Ikeo K."/>
            <person name="Iwama A."/>
            <person name="Ishikawa T."/>
            <person name="Jakt M."/>
            <person name="Kanapin A."/>
            <person name="Katoh M."/>
            <person name="Kawasawa Y."/>
            <person name="Kelso J."/>
            <person name="Kitamura H."/>
            <person name="Kitano H."/>
            <person name="Kollias G."/>
            <person name="Krishnan S.P."/>
            <person name="Kruger A."/>
            <person name="Kummerfeld S.K."/>
            <person name="Kurochkin I.V."/>
            <person name="Lareau L.F."/>
            <person name="Lazarevic D."/>
            <person name="Lipovich L."/>
            <person name="Liu J."/>
            <person name="Liuni S."/>
            <person name="McWilliam S."/>
            <person name="Madan Babu M."/>
            <person name="Madera M."/>
            <person name="Marchionni L."/>
            <person name="Matsuda H."/>
            <person name="Matsuzawa S."/>
            <person name="Miki H."/>
            <person name="Mignone F."/>
            <person name="Miyake S."/>
            <person name="Morris K."/>
            <person name="Mottagui-Tabar S."/>
            <person name="Mulder N."/>
            <person name="Nakano N."/>
            <person name="Nakauchi H."/>
            <person name="Ng P."/>
            <person name="Nilsson R."/>
            <person name="Nishiguchi S."/>
            <person name="Nishikawa S."/>
            <person name="Nori F."/>
            <person name="Ohara O."/>
            <person name="Okazaki Y."/>
            <person name="Orlando V."/>
            <person name="Pang K.C."/>
            <person name="Pavan W.J."/>
            <person name="Pavesi G."/>
            <person name="Pesole G."/>
            <person name="Petrovsky N."/>
            <person name="Piazza S."/>
            <person name="Reed J."/>
            <person name="Reid J.F."/>
            <person name="Ring B.Z."/>
            <person name="Ringwald M."/>
            <person name="Rost B."/>
            <person name="Ruan Y."/>
            <person name="Salzberg S.L."/>
            <person name="Sandelin A."/>
            <person name="Schneider C."/>
            <person name="Schoenbach C."/>
            <person name="Sekiguchi K."/>
            <person name="Semple C.A."/>
            <person name="Seno S."/>
            <person name="Sessa L."/>
            <person name="Sheng Y."/>
            <person name="Shibata Y."/>
            <person name="Shimada H."/>
            <person name="Shimada K."/>
            <person name="Silva D."/>
            <person name="Sinclair B."/>
            <person name="Sperling S."/>
            <person name="Stupka E."/>
            <person name="Sugiura K."/>
            <person name="Sultana R."/>
            <person name="Takenaka Y."/>
            <person name="Taki K."/>
            <person name="Tammoja K."/>
            <person name="Tan S.L."/>
            <person name="Tang S."/>
            <person name="Taylor M.S."/>
            <person name="Tegner J."/>
            <person name="Teichmann S.A."/>
            <person name="Ueda H.R."/>
            <person name="van Nimwegen E."/>
            <person name="Verardo R."/>
            <person name="Wei C.L."/>
            <person name="Yagi K."/>
            <person name="Yamanishi H."/>
            <person name="Zabarovsky E."/>
            <person name="Zhu S."/>
            <person name="Zimmer A."/>
            <person name="Hide W."/>
            <person name="Bult C."/>
            <person name="Grimmond S.M."/>
            <person name="Teasdale R.D."/>
            <person name="Liu E.T."/>
            <person name="Brusic V."/>
            <person name="Quackenbush J."/>
            <person name="Wahlestedt C."/>
            <person name="Mattick J.S."/>
            <person name="Hume D.A."/>
            <person name="Kai C."/>
            <person name="Sasaki D."/>
            <person name="Tomaru Y."/>
            <person name="Fukuda S."/>
            <person name="Kanamori-Katayama M."/>
            <person name="Suzuki M."/>
            <person name="Aoki J."/>
            <person name="Arakawa T."/>
            <person name="Iida J."/>
            <person name="Imamura K."/>
            <person name="Itoh M."/>
            <person name="Kato T."/>
            <person name="Kawaji H."/>
            <person name="Kawagashira N."/>
            <person name="Kawashima T."/>
            <person name="Kojima M."/>
            <person name="Kondo S."/>
            <person name="Konno H."/>
            <person name="Nakano K."/>
            <person name="Ninomiya N."/>
            <person name="Nishio T."/>
            <person name="Okada M."/>
            <person name="Plessy C."/>
            <person name="Shibata K."/>
            <person name="Shiraki T."/>
            <person name="Suzuki S."/>
            <person name="Tagami M."/>
            <person name="Waki K."/>
            <person name="Watahiki A."/>
            <person name="Okamura-Oho Y."/>
            <person name="Suzuki H."/>
            <person name="Kawai J."/>
            <person name="Hayashizaki Y."/>
        </authorList>
    </citation>
    <scope>NUCLEOTIDE SEQUENCE [LARGE SCALE MRNA]</scope>
    <source>
        <strain>C57BL/6J</strain>
        <tissue>Liver</tissue>
    </source>
</reference>
<reference key="4">
    <citation type="journal article" date="2004" name="Genome Res.">
        <title>The status, quality, and expansion of the NIH full-length cDNA project: the Mammalian Gene Collection (MGC).</title>
        <authorList>
            <consortium name="The MGC Project Team"/>
        </authorList>
    </citation>
    <scope>NUCLEOTIDE SEQUENCE [LARGE SCALE MRNA]</scope>
    <source>
        <strain>FVB/N</strain>
        <tissue>Liver</tissue>
    </source>
</reference>
<reference key="5">
    <citation type="journal article" date="2007" name="Proc. Natl. Acad. Sci. U.S.A.">
        <title>Large-scale phosphorylation analysis of mouse liver.</title>
        <authorList>
            <person name="Villen J."/>
            <person name="Beausoleil S.A."/>
            <person name="Gerber S.A."/>
            <person name="Gygi S.P."/>
        </authorList>
    </citation>
    <scope>PHOSPHORYLATION [LARGE SCALE ANALYSIS] AT SER-87</scope>
    <scope>IDENTIFICATION BY MASS SPECTROMETRY [LARGE SCALE ANALYSIS]</scope>
    <source>
        <tissue>Liver</tissue>
    </source>
</reference>
<reference key="6">
    <citation type="journal article" date="2009" name="Mol. Cell. Proteomics">
        <title>Large scale localization of protein phosphorylation by use of electron capture dissociation mass spectrometry.</title>
        <authorList>
            <person name="Sweet S.M."/>
            <person name="Bailey C.M."/>
            <person name="Cunningham D.L."/>
            <person name="Heath J.K."/>
            <person name="Cooper H.J."/>
        </authorList>
    </citation>
    <scope>PHOSPHORYLATION [LARGE SCALE ANALYSIS] AT SER-87</scope>
    <scope>IDENTIFICATION BY MASS SPECTROMETRY [LARGE SCALE ANALYSIS]</scope>
    <source>
        <tissue>Embryonic fibroblast</tissue>
    </source>
</reference>
<reference key="7">
    <citation type="journal article" date="2010" name="Cell">
        <title>A tissue-specific atlas of mouse protein phosphorylation and expression.</title>
        <authorList>
            <person name="Huttlin E.L."/>
            <person name="Jedrychowski M.P."/>
            <person name="Elias J.E."/>
            <person name="Goswami T."/>
            <person name="Rad R."/>
            <person name="Beausoleil S.A."/>
            <person name="Villen J."/>
            <person name="Haas W."/>
            <person name="Sowa M.E."/>
            <person name="Gygi S.P."/>
        </authorList>
    </citation>
    <scope>PHOSPHORYLATION [LARGE SCALE ANALYSIS] AT SER-87</scope>
    <scope>IDENTIFICATION BY MASS SPECTROMETRY [LARGE SCALE ANALYSIS]</scope>
    <source>
        <tissue>Heart</tissue>
        <tissue>Liver</tissue>
    </source>
</reference>
<reference key="8">
    <citation type="journal article" date="2010" name="Curr. Biol.">
        <title>Chaperone-assisted selective autophagy is essential for muscle maintenance.</title>
        <authorList>
            <person name="Arndt V."/>
            <person name="Dick N."/>
            <person name="Tawo R."/>
            <person name="Dreiseidler M."/>
            <person name="Wenzel D."/>
            <person name="Hesse M."/>
            <person name="Fuerst D.O."/>
            <person name="Saftig P."/>
            <person name="Saint R."/>
            <person name="Fleischmann B.K."/>
            <person name="Hoch M."/>
            <person name="Hoehfeld J."/>
        </authorList>
    </citation>
    <scope>FUNCTION</scope>
    <scope>INTERACTION WITH BAG3; HSPA8 AND STUB1 IN CASA COMPLEX</scope>
</reference>
<reference key="9">
    <citation type="journal article" date="2014" name="Mol. Cell. Proteomics">
        <title>Immunoaffinity enrichment and mass spectrometry analysis of protein methylation.</title>
        <authorList>
            <person name="Guo A."/>
            <person name="Gu H."/>
            <person name="Zhou J."/>
            <person name="Mulhern D."/>
            <person name="Wang Y."/>
            <person name="Lee K.A."/>
            <person name="Yang V."/>
            <person name="Aguiar M."/>
            <person name="Kornhauser J."/>
            <person name="Jia X."/>
            <person name="Ren J."/>
            <person name="Beausoleil S.A."/>
            <person name="Silva J.C."/>
            <person name="Vemulapalli V."/>
            <person name="Bedford M.T."/>
            <person name="Comb M.J."/>
        </authorList>
    </citation>
    <scope>METHYLATION [LARGE SCALE ANALYSIS] AT ARG-71 AND ARG-78</scope>
    <scope>IDENTIFICATION BY MASS SPECTROMETRY [LARGE SCALE ANALYSIS]</scope>
    <source>
        <tissue>Brain</tissue>
    </source>
</reference>
<sequence length="196" mass="21533">MADGQLPFPCSYPSRLRRDPFRDSPLSSRLLDDGFGMDPFPDDLTAPWPEWALPRLSSAWPGTLRSGMVPRGPPATARFGVPAEGRSPPPFPGEPWKVCVNVHSFKPEELMVKTKDGYVEVSGKHEEKQQEGGIVSKNFTKKIQLPAEVDPATVFASLSPEGLLIIEAPQVPPYSPFGESSFNNELPQDNQEVTCS</sequence>
<accession>Q9JK92</accession>
<dbReference type="EMBL" id="AF250139">
    <property type="protein sequence ID" value="AAF65563.1"/>
    <property type="molecule type" value="mRNA"/>
</dbReference>
<dbReference type="EMBL" id="AF273453">
    <property type="protein sequence ID" value="AAG00233.1"/>
    <property type="molecule type" value="mRNA"/>
</dbReference>
<dbReference type="EMBL" id="AK005052">
    <property type="protein sequence ID" value="BAB23778.1"/>
    <property type="molecule type" value="mRNA"/>
</dbReference>
<dbReference type="EMBL" id="BC011219">
    <property type="protein sequence ID" value="AAH11219.1"/>
    <property type="molecule type" value="mRNA"/>
</dbReference>
<dbReference type="CCDS" id="CCDS19600.1"/>
<dbReference type="RefSeq" id="NP_109629.1">
    <property type="nucleotide sequence ID" value="NM_030704.3"/>
</dbReference>
<dbReference type="SMR" id="Q9JK92"/>
<dbReference type="BioGRID" id="219831">
    <property type="interactions" value="3"/>
</dbReference>
<dbReference type="FunCoup" id="Q9JK92">
    <property type="interactions" value="421"/>
</dbReference>
<dbReference type="IntAct" id="Q9JK92">
    <property type="interactions" value="1"/>
</dbReference>
<dbReference type="MINT" id="Q9JK92"/>
<dbReference type="STRING" id="10090.ENSMUSP00000037007"/>
<dbReference type="GlyGen" id="Q9JK92">
    <property type="glycosylation" value="1 site, 1 O-linked glycan (1 site)"/>
</dbReference>
<dbReference type="iPTMnet" id="Q9JK92"/>
<dbReference type="PhosphoSitePlus" id="Q9JK92"/>
<dbReference type="jPOST" id="Q9JK92"/>
<dbReference type="PaxDb" id="10090-ENSMUSP00000037007"/>
<dbReference type="PeptideAtlas" id="Q9JK92"/>
<dbReference type="ProteomicsDB" id="273322"/>
<dbReference type="Pumba" id="Q9JK92"/>
<dbReference type="Antibodypedia" id="18895">
    <property type="antibodies" value="602 antibodies from 41 providers"/>
</dbReference>
<dbReference type="DNASU" id="80888"/>
<dbReference type="Ensembl" id="ENSMUST00000036991.5">
    <property type="protein sequence ID" value="ENSMUSP00000037007.5"/>
    <property type="gene ID" value="ENSMUSG00000041548.5"/>
</dbReference>
<dbReference type="GeneID" id="80888"/>
<dbReference type="KEGG" id="mmu:80888"/>
<dbReference type="UCSC" id="uc008zez.1">
    <property type="organism name" value="mouse"/>
</dbReference>
<dbReference type="AGR" id="MGI:2135756"/>
<dbReference type="CTD" id="26353"/>
<dbReference type="MGI" id="MGI:2135756">
    <property type="gene designation" value="Hspb8"/>
</dbReference>
<dbReference type="VEuPathDB" id="HostDB:ENSMUSG00000041548"/>
<dbReference type="eggNOG" id="KOG3591">
    <property type="taxonomic scope" value="Eukaryota"/>
</dbReference>
<dbReference type="GeneTree" id="ENSGT00940000160605"/>
<dbReference type="HOGENOM" id="CLU_095001_0_1_1"/>
<dbReference type="InParanoid" id="Q9JK92"/>
<dbReference type="OMA" id="PCHYPSR"/>
<dbReference type="OrthoDB" id="10060792at2759"/>
<dbReference type="PhylomeDB" id="Q9JK92"/>
<dbReference type="TreeFam" id="TF105049"/>
<dbReference type="Reactome" id="R-MMU-3371571">
    <property type="pathway name" value="HSF1-dependent transactivation"/>
</dbReference>
<dbReference type="BioGRID-ORCS" id="80888">
    <property type="hits" value="1 hit in 78 CRISPR screens"/>
</dbReference>
<dbReference type="ChiTaRS" id="Hspb8">
    <property type="organism name" value="mouse"/>
</dbReference>
<dbReference type="PRO" id="PR:Q9JK92"/>
<dbReference type="Proteomes" id="UP000000589">
    <property type="component" value="Chromosome 5"/>
</dbReference>
<dbReference type="RNAct" id="Q9JK92">
    <property type="molecule type" value="protein"/>
</dbReference>
<dbReference type="Bgee" id="ENSMUSG00000041548">
    <property type="expression patterns" value="Expressed in gastrula and 272 other cell types or tissues"/>
</dbReference>
<dbReference type="GO" id="GO:0005737">
    <property type="term" value="C:cytoplasm"/>
    <property type="evidence" value="ECO:0000250"/>
    <property type="project" value="UniProtKB"/>
</dbReference>
<dbReference type="GO" id="GO:0005829">
    <property type="term" value="C:cytosol"/>
    <property type="evidence" value="ECO:0007669"/>
    <property type="project" value="Ensembl"/>
</dbReference>
<dbReference type="GO" id="GO:0005654">
    <property type="term" value="C:nucleoplasm"/>
    <property type="evidence" value="ECO:0007669"/>
    <property type="project" value="Ensembl"/>
</dbReference>
<dbReference type="GO" id="GO:0005634">
    <property type="term" value="C:nucleus"/>
    <property type="evidence" value="ECO:0000250"/>
    <property type="project" value="UniProtKB"/>
</dbReference>
<dbReference type="GO" id="GO:0101031">
    <property type="term" value="C:protein folding chaperone complex"/>
    <property type="evidence" value="ECO:0007669"/>
    <property type="project" value="Ensembl"/>
</dbReference>
<dbReference type="GO" id="GO:0042803">
    <property type="term" value="F:protein homodimerization activity"/>
    <property type="evidence" value="ECO:0007669"/>
    <property type="project" value="Ensembl"/>
</dbReference>
<dbReference type="GO" id="GO:0034620">
    <property type="term" value="P:cellular response to unfolded protein"/>
    <property type="evidence" value="ECO:0007669"/>
    <property type="project" value="Ensembl"/>
</dbReference>
<dbReference type="GO" id="GO:1905337">
    <property type="term" value="P:positive regulation of aggrephagy"/>
    <property type="evidence" value="ECO:0007669"/>
    <property type="project" value="Ensembl"/>
</dbReference>
<dbReference type="CDD" id="cd06480">
    <property type="entry name" value="ACD_HspB8_like"/>
    <property type="match status" value="1"/>
</dbReference>
<dbReference type="FunFam" id="2.60.40.790:FF:000028">
    <property type="entry name" value="Heat shock protein beta-8"/>
    <property type="match status" value="1"/>
</dbReference>
<dbReference type="Gene3D" id="2.60.40.790">
    <property type="match status" value="1"/>
</dbReference>
<dbReference type="InterPro" id="IPR002068">
    <property type="entry name" value="A-crystallin/Hsp20_dom"/>
</dbReference>
<dbReference type="InterPro" id="IPR001436">
    <property type="entry name" value="Alpha-crystallin/sHSP_animal"/>
</dbReference>
<dbReference type="InterPro" id="IPR008978">
    <property type="entry name" value="HSP20-like_chaperone"/>
</dbReference>
<dbReference type="InterPro" id="IPR043254">
    <property type="entry name" value="HSPB8"/>
</dbReference>
<dbReference type="InterPro" id="IPR042790">
    <property type="entry name" value="HspB8_ACD"/>
</dbReference>
<dbReference type="PANTHER" id="PTHR46906">
    <property type="entry name" value="HEAT SHOCK PROTEIN BETA-8"/>
    <property type="match status" value="1"/>
</dbReference>
<dbReference type="PANTHER" id="PTHR46906:SF1">
    <property type="entry name" value="HEAT SHOCK PROTEIN BETA-8"/>
    <property type="match status" value="1"/>
</dbReference>
<dbReference type="Pfam" id="PF00011">
    <property type="entry name" value="HSP20"/>
    <property type="match status" value="1"/>
</dbReference>
<dbReference type="PRINTS" id="PR00299">
    <property type="entry name" value="ACRYSTALLIN"/>
</dbReference>
<dbReference type="SUPFAM" id="SSF49764">
    <property type="entry name" value="HSP20-like chaperones"/>
    <property type="match status" value="1"/>
</dbReference>
<dbReference type="PROSITE" id="PS01031">
    <property type="entry name" value="SHSP"/>
    <property type="match status" value="1"/>
</dbReference>
<organism>
    <name type="scientific">Mus musculus</name>
    <name type="common">Mouse</name>
    <dbReference type="NCBI Taxonomy" id="10090"/>
    <lineage>
        <taxon>Eukaryota</taxon>
        <taxon>Metazoa</taxon>
        <taxon>Chordata</taxon>
        <taxon>Craniata</taxon>
        <taxon>Vertebrata</taxon>
        <taxon>Euteleostomi</taxon>
        <taxon>Mammalia</taxon>
        <taxon>Eutheria</taxon>
        <taxon>Euarchontoglires</taxon>
        <taxon>Glires</taxon>
        <taxon>Rodentia</taxon>
        <taxon>Myomorpha</taxon>
        <taxon>Muroidea</taxon>
        <taxon>Muridae</taxon>
        <taxon>Murinae</taxon>
        <taxon>Mus</taxon>
        <taxon>Mus</taxon>
    </lineage>
</organism>
<keyword id="KW-0143">Chaperone</keyword>
<keyword id="KW-0963">Cytoplasm</keyword>
<keyword id="KW-0488">Methylation</keyword>
<keyword id="KW-0539">Nucleus</keyword>
<keyword id="KW-0597">Phosphoprotein</keyword>
<keyword id="KW-1185">Reference proteome</keyword>
<keyword id="KW-0346">Stress response</keyword>
<gene>
    <name type="primary">Hspb8</name>
    <name type="synonym">Cryac</name>
    <name type="synonym">Hsp22</name>
</gene>